<name>RL35_COLP3</name>
<accession>Q480B1</accession>
<dbReference type="EMBL" id="CP000083">
    <property type="protein sequence ID" value="AAZ27978.1"/>
    <property type="status" value="ALT_INIT"/>
    <property type="molecule type" value="Genomic_DNA"/>
</dbReference>
<dbReference type="RefSeq" id="WP_033094689.1">
    <property type="nucleotide sequence ID" value="NC_003910.7"/>
</dbReference>
<dbReference type="SMR" id="Q480B1"/>
<dbReference type="STRING" id="167879.CPS_2907"/>
<dbReference type="KEGG" id="cps:CPS_2907"/>
<dbReference type="eggNOG" id="COG0291">
    <property type="taxonomic scope" value="Bacteria"/>
</dbReference>
<dbReference type="HOGENOM" id="CLU_2286710_0_0_6"/>
<dbReference type="Proteomes" id="UP000000547">
    <property type="component" value="Chromosome"/>
</dbReference>
<dbReference type="GO" id="GO:0022625">
    <property type="term" value="C:cytosolic large ribosomal subunit"/>
    <property type="evidence" value="ECO:0007669"/>
    <property type="project" value="TreeGrafter"/>
</dbReference>
<dbReference type="GO" id="GO:0003735">
    <property type="term" value="F:structural constituent of ribosome"/>
    <property type="evidence" value="ECO:0007669"/>
    <property type="project" value="InterPro"/>
</dbReference>
<dbReference type="GO" id="GO:0006412">
    <property type="term" value="P:translation"/>
    <property type="evidence" value="ECO:0007669"/>
    <property type="project" value="UniProtKB-UniRule"/>
</dbReference>
<dbReference type="FunFam" id="4.10.410.60:FF:000001">
    <property type="entry name" value="50S ribosomal protein L35"/>
    <property type="match status" value="1"/>
</dbReference>
<dbReference type="Gene3D" id="4.10.410.60">
    <property type="match status" value="1"/>
</dbReference>
<dbReference type="HAMAP" id="MF_00514">
    <property type="entry name" value="Ribosomal_bL35"/>
    <property type="match status" value="1"/>
</dbReference>
<dbReference type="InterPro" id="IPR001706">
    <property type="entry name" value="Ribosomal_bL35"/>
</dbReference>
<dbReference type="InterPro" id="IPR021137">
    <property type="entry name" value="Ribosomal_bL35-like"/>
</dbReference>
<dbReference type="InterPro" id="IPR018265">
    <property type="entry name" value="Ribosomal_bL35_CS"/>
</dbReference>
<dbReference type="InterPro" id="IPR037229">
    <property type="entry name" value="Ribosomal_bL35_sf"/>
</dbReference>
<dbReference type="NCBIfam" id="TIGR00001">
    <property type="entry name" value="rpmI_bact"/>
    <property type="match status" value="1"/>
</dbReference>
<dbReference type="PANTHER" id="PTHR33343">
    <property type="entry name" value="54S RIBOSOMAL PROTEIN BL35M"/>
    <property type="match status" value="1"/>
</dbReference>
<dbReference type="PANTHER" id="PTHR33343:SF1">
    <property type="entry name" value="LARGE RIBOSOMAL SUBUNIT PROTEIN BL35M"/>
    <property type="match status" value="1"/>
</dbReference>
<dbReference type="Pfam" id="PF01632">
    <property type="entry name" value="Ribosomal_L35p"/>
    <property type="match status" value="1"/>
</dbReference>
<dbReference type="PRINTS" id="PR00064">
    <property type="entry name" value="RIBOSOMALL35"/>
</dbReference>
<dbReference type="SUPFAM" id="SSF143034">
    <property type="entry name" value="L35p-like"/>
    <property type="match status" value="1"/>
</dbReference>
<dbReference type="PROSITE" id="PS00936">
    <property type="entry name" value="RIBOSOMAL_L35"/>
    <property type="match status" value="1"/>
</dbReference>
<feature type="chain" id="PRO_0000258663" description="Large ribosomal subunit protein bL35">
    <location>
        <begin position="1"/>
        <end position="64"/>
    </location>
</feature>
<keyword id="KW-0687">Ribonucleoprotein</keyword>
<keyword id="KW-0689">Ribosomal protein</keyword>
<gene>
    <name evidence="1" type="primary">rpmI</name>
    <name type="ordered locus">CPS_2907</name>
</gene>
<sequence>MPKMKTNKGAAKRFKKTASGYKFKQAGLRHILTKRRTKVKRHLRAKCMIAASDIKSVKKLLRHG</sequence>
<reference key="1">
    <citation type="journal article" date="2005" name="Proc. Natl. Acad. Sci. U.S.A.">
        <title>The psychrophilic lifestyle as revealed by the genome sequence of Colwellia psychrerythraea 34H through genomic and proteomic analyses.</title>
        <authorList>
            <person name="Methe B.A."/>
            <person name="Nelson K.E."/>
            <person name="Deming J.W."/>
            <person name="Momen B."/>
            <person name="Melamud E."/>
            <person name="Zhang X."/>
            <person name="Moult J."/>
            <person name="Madupu R."/>
            <person name="Nelson W.C."/>
            <person name="Dodson R.J."/>
            <person name="Brinkac L.M."/>
            <person name="Daugherty S.C."/>
            <person name="Durkin A.S."/>
            <person name="DeBoy R.T."/>
            <person name="Kolonay J.F."/>
            <person name="Sullivan S.A."/>
            <person name="Zhou L."/>
            <person name="Davidsen T.M."/>
            <person name="Wu M."/>
            <person name="Huston A.L."/>
            <person name="Lewis M."/>
            <person name="Weaver B."/>
            <person name="Weidman J.F."/>
            <person name="Khouri H."/>
            <person name="Utterback T.R."/>
            <person name="Feldblyum T.V."/>
            <person name="Fraser C.M."/>
        </authorList>
    </citation>
    <scope>NUCLEOTIDE SEQUENCE [LARGE SCALE GENOMIC DNA]</scope>
    <source>
        <strain>34H / ATCC BAA-681</strain>
    </source>
</reference>
<evidence type="ECO:0000255" key="1">
    <source>
        <dbReference type="HAMAP-Rule" id="MF_00514"/>
    </source>
</evidence>
<evidence type="ECO:0000305" key="2"/>
<comment type="similarity">
    <text evidence="1">Belongs to the bacterial ribosomal protein bL35 family.</text>
</comment>
<comment type="sequence caution" evidence="2">
    <conflict type="erroneous initiation">
        <sequence resource="EMBL-CDS" id="AAZ27978"/>
    </conflict>
</comment>
<organism>
    <name type="scientific">Colwellia psychrerythraea (strain 34H / ATCC BAA-681)</name>
    <name type="common">Vibrio psychroerythus</name>
    <dbReference type="NCBI Taxonomy" id="167879"/>
    <lineage>
        <taxon>Bacteria</taxon>
        <taxon>Pseudomonadati</taxon>
        <taxon>Pseudomonadota</taxon>
        <taxon>Gammaproteobacteria</taxon>
        <taxon>Alteromonadales</taxon>
        <taxon>Colwelliaceae</taxon>
        <taxon>Colwellia</taxon>
    </lineage>
</organism>
<proteinExistence type="inferred from homology"/>
<protein>
    <recommendedName>
        <fullName evidence="1">Large ribosomal subunit protein bL35</fullName>
    </recommendedName>
    <alternativeName>
        <fullName evidence="2">50S ribosomal protein L35</fullName>
    </alternativeName>
</protein>